<sequence>MLDSKLLRTQLQDVADRLASRGFTLDVARIESLEAQRKVVQTRTEQLQAERNARSKSIGQAKQRGEDIAPLMADVERMGNELSEGKVELDGIQAELDALVLSIPNLPHESVPVGADEEGNVEVRRWGTPTSFDFEVKDHVALGEKFGWLDFETAAKLSGARFALLRGPIARLHRALAQFMINLHINEHGYEETYTPYLVQAPALQGTGQLPKFEEDLFKISREGEADLYLIPTAEVSLTNIVSGEILDAKQLPLKFVAHTPCFRSEAGASGRDTRGMIRQHQFDKVEMVQIVAPDDSMAALESLTGNAERVLQLLELPYRTLALCTGDMGFSAVKTYDLEVWIPSQDKYREISSCSNCGDFQARRMQARWRNPETGKPELVHTLNGSGLAVGRTLVAVLENYQQADGSIRVPEVLKPYMGGLEVIG</sequence>
<dbReference type="EC" id="6.1.1.11" evidence="1"/>
<dbReference type="EMBL" id="CP000075">
    <property type="protein sequence ID" value="AAY38207.1"/>
    <property type="molecule type" value="Genomic_DNA"/>
</dbReference>
<dbReference type="RefSeq" id="WP_003317946.1">
    <property type="nucleotide sequence ID" value="NC_007005.1"/>
</dbReference>
<dbReference type="RefSeq" id="YP_236245.1">
    <property type="nucleotide sequence ID" value="NC_007005.1"/>
</dbReference>
<dbReference type="SMR" id="Q4ZRL5"/>
<dbReference type="STRING" id="205918.Psyr_3175"/>
<dbReference type="GeneID" id="77278986"/>
<dbReference type="KEGG" id="psb:Psyr_3175"/>
<dbReference type="PATRIC" id="fig|205918.7.peg.3240"/>
<dbReference type="eggNOG" id="COG0172">
    <property type="taxonomic scope" value="Bacteria"/>
</dbReference>
<dbReference type="HOGENOM" id="CLU_023797_1_1_6"/>
<dbReference type="OrthoDB" id="9804647at2"/>
<dbReference type="UniPathway" id="UPA00906">
    <property type="reaction ID" value="UER00895"/>
</dbReference>
<dbReference type="Proteomes" id="UP000000426">
    <property type="component" value="Chromosome"/>
</dbReference>
<dbReference type="GO" id="GO:0005737">
    <property type="term" value="C:cytoplasm"/>
    <property type="evidence" value="ECO:0007669"/>
    <property type="project" value="UniProtKB-SubCell"/>
</dbReference>
<dbReference type="GO" id="GO:0005524">
    <property type="term" value="F:ATP binding"/>
    <property type="evidence" value="ECO:0007669"/>
    <property type="project" value="UniProtKB-UniRule"/>
</dbReference>
<dbReference type="GO" id="GO:0004828">
    <property type="term" value="F:serine-tRNA ligase activity"/>
    <property type="evidence" value="ECO:0007669"/>
    <property type="project" value="UniProtKB-UniRule"/>
</dbReference>
<dbReference type="GO" id="GO:0016260">
    <property type="term" value="P:selenocysteine biosynthetic process"/>
    <property type="evidence" value="ECO:0007669"/>
    <property type="project" value="UniProtKB-UniRule"/>
</dbReference>
<dbReference type="GO" id="GO:0006434">
    <property type="term" value="P:seryl-tRNA aminoacylation"/>
    <property type="evidence" value="ECO:0007669"/>
    <property type="project" value="UniProtKB-UniRule"/>
</dbReference>
<dbReference type="CDD" id="cd00770">
    <property type="entry name" value="SerRS_core"/>
    <property type="match status" value="1"/>
</dbReference>
<dbReference type="Gene3D" id="3.30.930.10">
    <property type="entry name" value="Bira Bifunctional Protein, Domain 2"/>
    <property type="match status" value="1"/>
</dbReference>
<dbReference type="Gene3D" id="1.10.287.40">
    <property type="entry name" value="Serine-tRNA synthetase, tRNA binding domain"/>
    <property type="match status" value="1"/>
</dbReference>
<dbReference type="HAMAP" id="MF_00176">
    <property type="entry name" value="Ser_tRNA_synth_type1"/>
    <property type="match status" value="1"/>
</dbReference>
<dbReference type="InterPro" id="IPR002314">
    <property type="entry name" value="aa-tRNA-synt_IIb"/>
</dbReference>
<dbReference type="InterPro" id="IPR006195">
    <property type="entry name" value="aa-tRNA-synth_II"/>
</dbReference>
<dbReference type="InterPro" id="IPR045864">
    <property type="entry name" value="aa-tRNA-synth_II/BPL/LPL"/>
</dbReference>
<dbReference type="InterPro" id="IPR002317">
    <property type="entry name" value="Ser-tRNA-ligase_type_1"/>
</dbReference>
<dbReference type="InterPro" id="IPR015866">
    <property type="entry name" value="Ser-tRNA-synth_1_N"/>
</dbReference>
<dbReference type="InterPro" id="IPR042103">
    <property type="entry name" value="SerRS_1_N_sf"/>
</dbReference>
<dbReference type="InterPro" id="IPR033729">
    <property type="entry name" value="SerRS_core"/>
</dbReference>
<dbReference type="InterPro" id="IPR010978">
    <property type="entry name" value="tRNA-bd_arm"/>
</dbReference>
<dbReference type="NCBIfam" id="TIGR00414">
    <property type="entry name" value="serS"/>
    <property type="match status" value="1"/>
</dbReference>
<dbReference type="PANTHER" id="PTHR43697:SF1">
    <property type="entry name" value="SERINE--TRNA LIGASE"/>
    <property type="match status" value="1"/>
</dbReference>
<dbReference type="PANTHER" id="PTHR43697">
    <property type="entry name" value="SERYL-TRNA SYNTHETASE"/>
    <property type="match status" value="1"/>
</dbReference>
<dbReference type="Pfam" id="PF02403">
    <property type="entry name" value="Seryl_tRNA_N"/>
    <property type="match status" value="1"/>
</dbReference>
<dbReference type="Pfam" id="PF00587">
    <property type="entry name" value="tRNA-synt_2b"/>
    <property type="match status" value="1"/>
</dbReference>
<dbReference type="PIRSF" id="PIRSF001529">
    <property type="entry name" value="Ser-tRNA-synth_IIa"/>
    <property type="match status" value="1"/>
</dbReference>
<dbReference type="PRINTS" id="PR00981">
    <property type="entry name" value="TRNASYNTHSER"/>
</dbReference>
<dbReference type="SUPFAM" id="SSF55681">
    <property type="entry name" value="Class II aaRS and biotin synthetases"/>
    <property type="match status" value="1"/>
</dbReference>
<dbReference type="SUPFAM" id="SSF46589">
    <property type="entry name" value="tRNA-binding arm"/>
    <property type="match status" value="1"/>
</dbReference>
<dbReference type="PROSITE" id="PS50862">
    <property type="entry name" value="AA_TRNA_LIGASE_II"/>
    <property type="match status" value="1"/>
</dbReference>
<name>SYS_PSEU2</name>
<protein>
    <recommendedName>
        <fullName evidence="1">Serine--tRNA ligase</fullName>
        <ecNumber evidence="1">6.1.1.11</ecNumber>
    </recommendedName>
    <alternativeName>
        <fullName evidence="1">Seryl-tRNA synthetase</fullName>
        <shortName evidence="1">SerRS</shortName>
    </alternativeName>
    <alternativeName>
        <fullName evidence="1">Seryl-tRNA(Ser/Sec) synthetase</fullName>
    </alternativeName>
</protein>
<proteinExistence type="inferred from homology"/>
<feature type="chain" id="PRO_1000019780" description="Serine--tRNA ligase">
    <location>
        <begin position="1"/>
        <end position="426"/>
    </location>
</feature>
<feature type="binding site" evidence="1">
    <location>
        <begin position="233"/>
        <end position="235"/>
    </location>
    <ligand>
        <name>L-serine</name>
        <dbReference type="ChEBI" id="CHEBI:33384"/>
    </ligand>
</feature>
<feature type="binding site" evidence="1">
    <location>
        <begin position="264"/>
        <end position="266"/>
    </location>
    <ligand>
        <name>ATP</name>
        <dbReference type="ChEBI" id="CHEBI:30616"/>
    </ligand>
</feature>
<feature type="binding site" evidence="1">
    <location>
        <position position="287"/>
    </location>
    <ligand>
        <name>L-serine</name>
        <dbReference type="ChEBI" id="CHEBI:33384"/>
    </ligand>
</feature>
<feature type="binding site" evidence="1">
    <location>
        <begin position="351"/>
        <end position="354"/>
    </location>
    <ligand>
        <name>ATP</name>
        <dbReference type="ChEBI" id="CHEBI:30616"/>
    </ligand>
</feature>
<feature type="binding site" evidence="1">
    <location>
        <position position="387"/>
    </location>
    <ligand>
        <name>L-serine</name>
        <dbReference type="ChEBI" id="CHEBI:33384"/>
    </ligand>
</feature>
<evidence type="ECO:0000255" key="1">
    <source>
        <dbReference type="HAMAP-Rule" id="MF_00176"/>
    </source>
</evidence>
<gene>
    <name evidence="1" type="primary">serS</name>
    <name type="ordered locus">Psyr_3175</name>
</gene>
<reference key="1">
    <citation type="journal article" date="2005" name="Proc. Natl. Acad. Sci. U.S.A.">
        <title>Comparison of the complete genome sequences of Pseudomonas syringae pv. syringae B728a and pv. tomato DC3000.</title>
        <authorList>
            <person name="Feil H."/>
            <person name="Feil W.S."/>
            <person name="Chain P."/>
            <person name="Larimer F."/>
            <person name="Dibartolo G."/>
            <person name="Copeland A."/>
            <person name="Lykidis A."/>
            <person name="Trong S."/>
            <person name="Nolan M."/>
            <person name="Goltsman E."/>
            <person name="Thiel J."/>
            <person name="Malfatti S."/>
            <person name="Loper J.E."/>
            <person name="Lapidus A."/>
            <person name="Detter J.C."/>
            <person name="Land M."/>
            <person name="Richardson P.M."/>
            <person name="Kyrpides N.C."/>
            <person name="Ivanova N."/>
            <person name="Lindow S.E."/>
        </authorList>
    </citation>
    <scope>NUCLEOTIDE SEQUENCE [LARGE SCALE GENOMIC DNA]</scope>
    <source>
        <strain>B728a</strain>
    </source>
</reference>
<organism>
    <name type="scientific">Pseudomonas syringae pv. syringae (strain B728a)</name>
    <dbReference type="NCBI Taxonomy" id="205918"/>
    <lineage>
        <taxon>Bacteria</taxon>
        <taxon>Pseudomonadati</taxon>
        <taxon>Pseudomonadota</taxon>
        <taxon>Gammaproteobacteria</taxon>
        <taxon>Pseudomonadales</taxon>
        <taxon>Pseudomonadaceae</taxon>
        <taxon>Pseudomonas</taxon>
        <taxon>Pseudomonas syringae</taxon>
    </lineage>
</organism>
<keyword id="KW-0030">Aminoacyl-tRNA synthetase</keyword>
<keyword id="KW-0067">ATP-binding</keyword>
<keyword id="KW-0963">Cytoplasm</keyword>
<keyword id="KW-0436">Ligase</keyword>
<keyword id="KW-0547">Nucleotide-binding</keyword>
<keyword id="KW-0648">Protein biosynthesis</keyword>
<comment type="function">
    <text evidence="1">Catalyzes the attachment of serine to tRNA(Ser). Is also able to aminoacylate tRNA(Sec) with serine, to form the misacylated tRNA L-seryl-tRNA(Sec), which will be further converted into selenocysteinyl-tRNA(Sec).</text>
</comment>
<comment type="catalytic activity">
    <reaction evidence="1">
        <text>tRNA(Ser) + L-serine + ATP = L-seryl-tRNA(Ser) + AMP + diphosphate + H(+)</text>
        <dbReference type="Rhea" id="RHEA:12292"/>
        <dbReference type="Rhea" id="RHEA-COMP:9669"/>
        <dbReference type="Rhea" id="RHEA-COMP:9703"/>
        <dbReference type="ChEBI" id="CHEBI:15378"/>
        <dbReference type="ChEBI" id="CHEBI:30616"/>
        <dbReference type="ChEBI" id="CHEBI:33019"/>
        <dbReference type="ChEBI" id="CHEBI:33384"/>
        <dbReference type="ChEBI" id="CHEBI:78442"/>
        <dbReference type="ChEBI" id="CHEBI:78533"/>
        <dbReference type="ChEBI" id="CHEBI:456215"/>
        <dbReference type="EC" id="6.1.1.11"/>
    </reaction>
</comment>
<comment type="catalytic activity">
    <reaction evidence="1">
        <text>tRNA(Sec) + L-serine + ATP = L-seryl-tRNA(Sec) + AMP + diphosphate + H(+)</text>
        <dbReference type="Rhea" id="RHEA:42580"/>
        <dbReference type="Rhea" id="RHEA-COMP:9742"/>
        <dbReference type="Rhea" id="RHEA-COMP:10128"/>
        <dbReference type="ChEBI" id="CHEBI:15378"/>
        <dbReference type="ChEBI" id="CHEBI:30616"/>
        <dbReference type="ChEBI" id="CHEBI:33019"/>
        <dbReference type="ChEBI" id="CHEBI:33384"/>
        <dbReference type="ChEBI" id="CHEBI:78442"/>
        <dbReference type="ChEBI" id="CHEBI:78533"/>
        <dbReference type="ChEBI" id="CHEBI:456215"/>
        <dbReference type="EC" id="6.1.1.11"/>
    </reaction>
</comment>
<comment type="pathway">
    <text evidence="1">Aminoacyl-tRNA biosynthesis; selenocysteinyl-tRNA(Sec) biosynthesis; L-seryl-tRNA(Sec) from L-serine and tRNA(Sec): step 1/1.</text>
</comment>
<comment type="subunit">
    <text evidence="1">Homodimer. The tRNA molecule binds across the dimer.</text>
</comment>
<comment type="subcellular location">
    <subcellularLocation>
        <location evidence="1">Cytoplasm</location>
    </subcellularLocation>
</comment>
<comment type="domain">
    <text evidence="1">Consists of two distinct domains, a catalytic core and a N-terminal extension that is involved in tRNA binding.</text>
</comment>
<comment type="similarity">
    <text evidence="1">Belongs to the class-II aminoacyl-tRNA synthetase family. Type-1 seryl-tRNA synthetase subfamily.</text>
</comment>
<accession>Q4ZRL5</accession>